<sequence>MSAFTFSPSRHDGPGTEVYGRPPGILSAQLSYPAAAPPAVFFPGADFPGTYSFRSYPQNLWITVAPLLREKALLTA</sequence>
<accession>Q9JMR9</accession>
<keyword id="KW-0614">Plasmid</keyword>
<name>YUAV_ECOLI</name>
<dbReference type="EMBL" id="AP001918">
    <property type="protein sequence ID" value="BAA97906.1"/>
    <property type="molecule type" value="Genomic_DNA"/>
</dbReference>
<dbReference type="RefSeq" id="NP_061415.1">
    <property type="nucleotide sequence ID" value="NC_002483.1"/>
</dbReference>
<proteinExistence type="predicted"/>
<geneLocation type="plasmid">
    <name>F</name>
</geneLocation>
<feature type="chain" id="PRO_0000268025" description="Uncharacterized protein YuaV">
    <location>
        <begin position="1"/>
        <end position="76"/>
    </location>
</feature>
<reference key="1">
    <citation type="submission" date="2000-04" db="EMBL/GenBank/DDBJ databases">
        <title>Complete nucleotide sequence of the F plasmid: its implications for organization and diversification of plasmid genomes.</title>
        <authorList>
            <person name="Shimizu H."/>
            <person name="Saitoh Y."/>
            <person name="Suda Y."/>
            <person name="Uehara K."/>
            <person name="Sampei G."/>
            <person name="Mizobuchi K."/>
        </authorList>
    </citation>
    <scope>NUCLEOTIDE SEQUENCE [LARGE SCALE GENOMIC DNA]</scope>
    <source>
        <strain>K12 / CR63</strain>
    </source>
</reference>
<gene>
    <name type="primary">yuaV</name>
    <name type="synonym">ydjA</name>
    <name type="ordered locus">ECOK12F036</name>
</gene>
<organism>
    <name type="scientific">Escherichia coli (strain K12)</name>
    <dbReference type="NCBI Taxonomy" id="83333"/>
    <lineage>
        <taxon>Bacteria</taxon>
        <taxon>Pseudomonadati</taxon>
        <taxon>Pseudomonadota</taxon>
        <taxon>Gammaproteobacteria</taxon>
        <taxon>Enterobacterales</taxon>
        <taxon>Enterobacteriaceae</taxon>
        <taxon>Escherichia</taxon>
    </lineage>
</organism>
<protein>
    <recommendedName>
        <fullName>Uncharacterized protein YuaV</fullName>
    </recommendedName>
</protein>